<keyword id="KW-0002">3D-structure</keyword>
<keyword id="KW-0167">Capsid protein</keyword>
<keyword id="KW-1139">Helical capsid protein</keyword>
<keyword id="KW-1030">Host cell inner membrane</keyword>
<keyword id="KW-1032">Host cell membrane</keyword>
<keyword id="KW-1043">Host membrane</keyword>
<keyword id="KW-0472">Membrane</keyword>
<keyword id="KW-1185">Reference proteome</keyword>
<keyword id="KW-0812">Transmembrane</keyword>
<keyword id="KW-1133">Transmembrane helix</keyword>
<keyword id="KW-0946">Virion</keyword>
<feature type="chain" id="PRO_0000098207" description="Capsid protein G8P">
    <location>
        <begin position="1"/>
        <end position="44"/>
    </location>
</feature>
<feature type="topological domain" description="Periplasmic" evidence="2">
    <location>
        <begin position="1"/>
        <end position="18"/>
    </location>
</feature>
<feature type="transmembrane region" description="Helical">
    <location>
        <begin position="19"/>
        <end position="39"/>
    </location>
</feature>
<feature type="topological domain" description="Cytoplasmic" evidence="2">
    <location>
        <begin position="40"/>
        <end position="44"/>
    </location>
</feature>
<feature type="helix" evidence="4">
    <location>
        <begin position="2"/>
        <end position="43"/>
    </location>
</feature>
<organismHost>
    <name type="scientific">Pseudomonas aeruginosa</name>
    <dbReference type="NCBI Taxonomy" id="287"/>
</organismHost>
<reference key="1">
    <citation type="journal article" date="1985" name="J. Virol.">
        <title>Nucleotide sequence of the genome of Pf3, an IncP-1 plasmid-specific filamentous bacteriophage of Pseudomonas aeruginosa.</title>
        <authorList>
            <person name="Luiten R.G.M."/>
            <person name="Putterman D.G."/>
            <person name="Schoenmakers J.G.G."/>
            <person name="Konings R.N.H."/>
            <person name="Day L.A."/>
        </authorList>
    </citation>
    <scope>NUCLEOTIDE SEQUENCE [GENOMIC DNA]</scope>
    <source>
        <strain>New York</strain>
        <strain>Nijmegen</strain>
    </source>
</reference>
<reference key="2">
    <citation type="journal article" date="1984" name="Proc. Natl. Acad. Sci. U.S.A.">
        <title>Major coat protein and single-stranded DNA-binding protein of filamentous virus Pf3.</title>
        <authorList>
            <person name="Putterman D.G."/>
            <person name="Casadevall A."/>
            <person name="Boyle P.D."/>
            <person name="Yang H.-L."/>
            <person name="Frangione B."/>
            <person name="Day L.A."/>
        </authorList>
    </citation>
    <scope>NUCLEOTIDE SEQUENCE [GENOMIC DNA]</scope>
</reference>
<reference key="3">
    <citation type="journal article" date="1983" name="Nucleic Acids Res.">
        <title>The major coat protein gene of the filamentous Pseudomonas aeruginosa phage Pf3: absence of an N-terminal leader signal sequence.</title>
        <authorList>
            <person name="Luiten R.G.M."/>
            <person name="Schoenmakers J.G.G."/>
            <person name="Konings R.N.H."/>
        </authorList>
    </citation>
    <scope>NUCLEOTIDE SEQUENCE [GENOMIC DNA]</scope>
</reference>
<reference key="4">
    <citation type="journal article" date="1998" name="J. Mol. Biol.">
        <title>Structure of the capsid of Pf3 filamentous phage determined from X-ray fibre diffraction data at 3.1-A resolution.</title>
        <authorList>
            <person name="Welsh L.C."/>
            <person name="Symmons M.F."/>
            <person name="Sturtevant J.M."/>
            <person name="Marvin D.A."/>
            <person name="Perham R.N."/>
        </authorList>
    </citation>
    <scope>X-RAY CRYSTALLOGRAPHY (3.1 ANGSTROMS)</scope>
</reference>
<reference key="5">
    <citation type="journal article" date="1999" name="EMBO J.">
        <title>Hydrophobic forces drive spontaneous membrane insertion of the bacteriophage Pf3 coat protein without topological control.</title>
        <authorList>
            <person name="Kiefer D."/>
            <person name="Kuhn A."/>
        </authorList>
    </citation>
    <scope>TOPOLOGY</scope>
</reference>
<reference key="6">
    <citation type="journal article" date="2003" name="J. Biol. Chem.">
        <title>Conditional lethal mutations separate the M13 procoat and Pf3 coat functions of YidC: different YidC structural requirements for membrane protein insertion.</title>
        <authorList>
            <person name="Chen M."/>
            <person name="Xie K."/>
            <person name="Nouwen N."/>
            <person name="Driessen A.J."/>
            <person name="Dalbey R.E."/>
        </authorList>
    </citation>
    <scope>MEMBRANE INSERTION DEPENDS ON YIDC</scope>
</reference>
<organism>
    <name type="scientific">Pseudomonas phage Pf3</name>
    <name type="common">Bacteriophage Pf3</name>
    <dbReference type="NCBI Taxonomy" id="10872"/>
    <lineage>
        <taxon>Viruses</taxon>
        <taxon>Monodnaviria</taxon>
        <taxon>Loebvirae</taxon>
        <taxon>Hofneiviricota</taxon>
        <taxon>Faserviricetes</taxon>
        <taxon>Tubulavirales</taxon>
        <taxon>Inoviridae</taxon>
        <taxon>Tertilicivirus</taxon>
        <taxon>Tertilicivirus Pf3</taxon>
    </lineage>
</organism>
<protein>
    <recommendedName>
        <fullName>Capsid protein G8P</fullName>
    </recommendedName>
    <alternativeName>
        <fullName>Coat protein B</fullName>
    </alternativeName>
    <alternativeName>
        <fullName>Gene 8 protein</fullName>
        <shortName>G8P</shortName>
    </alternativeName>
    <alternativeName>
        <fullName>Major coat protein</fullName>
    </alternativeName>
    <alternativeName>
        <fullName>Pf3 coat protein</fullName>
    </alternativeName>
</protein>
<sequence>MQSVITDVTGQLTAVQADITTIGGAIIVLAAVVLGIRWIKAQFF</sequence>
<comment type="function">
    <text evidence="1">Self assembles to form a helical capsid wrapping up the viral genomic DNA. The capsid displays a filamentous structure with a length of 760-1950 nm and a width of 6-8 nm. The virion assembly and budding take place at the host inner membrane (By similarity).</text>
</comment>
<comment type="subunit">
    <text evidence="1">Homomultimerizes. There are several thousand copies of this protein in the phage capsid (By similarity).</text>
</comment>
<comment type="interaction">
    <interactant intactId="EBI-8482910">
        <id>P03623</id>
    </interactant>
    <interactant intactId="EBI-6400779">
        <id>P25714</id>
        <label>yidC</label>
    </interactant>
    <organismsDiffer>true</organismsDiffer>
    <experiments>5</experiments>
</comment>
<comment type="subcellular location">
    <subcellularLocation>
        <location evidence="3">Virion</location>
    </subcellularLocation>
    <subcellularLocation>
        <location>Host cell inner membrane</location>
        <topology>Single-pass membrane protein</topology>
    </subcellularLocation>
    <text>Insertion into the host inner membrane requires YidC but not the Sec translocon. Virion assembly occurs after insertion.</text>
</comment>
<comment type="similarity">
    <text evidence="3">Belongs to the inovirus capsid protein family.</text>
</comment>
<dbReference type="EMBL" id="X00167">
    <property type="protein sequence ID" value="CAA24992.1"/>
    <property type="molecule type" value="Genomic_DNA"/>
</dbReference>
<dbReference type="EMBL" id="K01435">
    <property type="protein sequence ID" value="AAA72243.1"/>
    <property type="molecule type" value="Genomic_DNA"/>
</dbReference>
<dbReference type="EMBL" id="M11912">
    <property type="protein sequence ID" value="AAA88378.1"/>
    <property type="molecule type" value="Genomic_DNA"/>
</dbReference>
<dbReference type="EMBL" id="M19377">
    <property type="protein sequence ID" value="AAA88387.1"/>
    <property type="molecule type" value="Genomic_DNA"/>
</dbReference>
<dbReference type="PIR" id="A04231">
    <property type="entry name" value="VCBPP3"/>
</dbReference>
<dbReference type="RefSeq" id="NP_040652.1">
    <property type="nucleotide sequence ID" value="NC_001418.1"/>
</dbReference>
<dbReference type="PDB" id="1IFP">
    <property type="method" value="Fiber"/>
    <property type="resolution" value="3.10 A"/>
    <property type="chains" value="A=1-44"/>
</dbReference>
<dbReference type="PDBsum" id="1IFP"/>
<dbReference type="SMR" id="P03623"/>
<dbReference type="DIP" id="DIP-17009N"/>
<dbReference type="IntAct" id="P03623">
    <property type="interactions" value="1"/>
</dbReference>
<dbReference type="MINT" id="P03623"/>
<dbReference type="KEGG" id="vg:1260904"/>
<dbReference type="EvolutionaryTrace" id="P03623"/>
<dbReference type="Proteomes" id="UP000001719">
    <property type="component" value="Genome"/>
</dbReference>
<dbReference type="Proteomes" id="UP000009090">
    <property type="component" value="Genome"/>
</dbReference>
<dbReference type="GO" id="GO:0019029">
    <property type="term" value="C:helical viral capsid"/>
    <property type="evidence" value="ECO:0007669"/>
    <property type="project" value="UniProtKB-KW"/>
</dbReference>
<dbReference type="GO" id="GO:0020002">
    <property type="term" value="C:host cell plasma membrane"/>
    <property type="evidence" value="ECO:0007669"/>
    <property type="project" value="UniProtKB-SubCell"/>
</dbReference>
<dbReference type="GO" id="GO:0016020">
    <property type="term" value="C:membrane"/>
    <property type="evidence" value="ECO:0007669"/>
    <property type="project" value="UniProtKB-KW"/>
</dbReference>
<dbReference type="Gene3D" id="1.20.5.440">
    <property type="entry name" value="ATP synthase delta/epsilon subunit, C-terminal domain"/>
    <property type="match status" value="1"/>
</dbReference>
<dbReference type="InterPro" id="IPR008020">
    <property type="entry name" value="G8P"/>
</dbReference>
<dbReference type="Pfam" id="PF05356">
    <property type="entry name" value="Phage_Coat_B"/>
    <property type="match status" value="1"/>
</dbReference>
<dbReference type="SUPFAM" id="SSF57987">
    <property type="entry name" value="Inovirus (filamentous phage) major coat protein"/>
    <property type="match status" value="1"/>
</dbReference>
<proteinExistence type="evidence at protein level"/>
<name>CAPSD_BPPF3</name>
<accession>P03623</accession>
<evidence type="ECO:0000250" key="1"/>
<evidence type="ECO:0000269" key="2">
    <source>
    </source>
</evidence>
<evidence type="ECO:0000305" key="3"/>
<evidence type="ECO:0007829" key="4">
    <source>
        <dbReference type="PDB" id="1IFP"/>
    </source>
</evidence>
<gene>
    <name type="primary">VIII</name>
</gene>